<sequence>MELNIKMDRSKELFEESKKYLVGGVNSPVRSFKPFPFFVKSAKDCFLYDEDGNEFIDYCLAYGPMVLGHANENILNAVKSQMDLGTAYGVPSEKEILLAKEVINRIPCAEMVRFVNSGTEATMGAIRLARGVTGKDKIIKFEGAFHGAHDYVLVKTGSGALTHGAPNSPGIPEDTTKNTLLIPFNDEDAVRKVISENKNEIACIILEPVMGNVGCILPQDGYLQFLREITEENGILLIFDEVITGFRLSKGGAQEYYGIKSDLATVGKILGGGFPIGAITGKKEYMEQFSPNGQIYQAGTFNGNPVSVTAGIETLKNLEDKFYKETTKKADILSDFLRETAEKYNISAKVYNVASIFQVYFNEKEVVTYEDAKSSDTEKFMRYFYTLLENGVFVAPSQFECCFTSIKHNDEVLEKTMNAIDIAMKKL</sequence>
<keyword id="KW-0963">Cytoplasm</keyword>
<keyword id="KW-0413">Isomerase</keyword>
<keyword id="KW-0627">Porphyrin biosynthesis</keyword>
<keyword id="KW-0663">Pyridoxal phosphate</keyword>
<accession>A9A875</accession>
<dbReference type="EC" id="5.4.3.8" evidence="1"/>
<dbReference type="EMBL" id="CP000867">
    <property type="protein sequence ID" value="ABX01548.1"/>
    <property type="molecule type" value="Genomic_DNA"/>
</dbReference>
<dbReference type="SMR" id="A9A875"/>
<dbReference type="STRING" id="444158.MmarC6_0731"/>
<dbReference type="KEGG" id="mmx:MmarC6_0731"/>
<dbReference type="eggNOG" id="arCOG00918">
    <property type="taxonomic scope" value="Archaea"/>
</dbReference>
<dbReference type="HOGENOM" id="CLU_016922_1_5_2"/>
<dbReference type="OrthoDB" id="6524at2157"/>
<dbReference type="PhylomeDB" id="A9A875"/>
<dbReference type="UniPathway" id="UPA00251">
    <property type="reaction ID" value="UER00317"/>
</dbReference>
<dbReference type="GO" id="GO:0005737">
    <property type="term" value="C:cytoplasm"/>
    <property type="evidence" value="ECO:0007669"/>
    <property type="project" value="UniProtKB-SubCell"/>
</dbReference>
<dbReference type="GO" id="GO:0042286">
    <property type="term" value="F:glutamate-1-semialdehyde 2,1-aminomutase activity"/>
    <property type="evidence" value="ECO:0007669"/>
    <property type="project" value="UniProtKB-UniRule"/>
</dbReference>
<dbReference type="GO" id="GO:0030170">
    <property type="term" value="F:pyridoxal phosphate binding"/>
    <property type="evidence" value="ECO:0007669"/>
    <property type="project" value="InterPro"/>
</dbReference>
<dbReference type="GO" id="GO:0008483">
    <property type="term" value="F:transaminase activity"/>
    <property type="evidence" value="ECO:0007669"/>
    <property type="project" value="InterPro"/>
</dbReference>
<dbReference type="GO" id="GO:0006782">
    <property type="term" value="P:protoporphyrinogen IX biosynthetic process"/>
    <property type="evidence" value="ECO:0007669"/>
    <property type="project" value="UniProtKB-UniRule"/>
</dbReference>
<dbReference type="CDD" id="cd00610">
    <property type="entry name" value="OAT_like"/>
    <property type="match status" value="1"/>
</dbReference>
<dbReference type="FunFam" id="3.40.640.10:FF:000021">
    <property type="entry name" value="Glutamate-1-semialdehyde 2,1-aminomutase"/>
    <property type="match status" value="1"/>
</dbReference>
<dbReference type="Gene3D" id="3.90.1150.10">
    <property type="entry name" value="Aspartate Aminotransferase, domain 1"/>
    <property type="match status" value="1"/>
</dbReference>
<dbReference type="Gene3D" id="3.40.640.10">
    <property type="entry name" value="Type I PLP-dependent aspartate aminotransferase-like (Major domain)"/>
    <property type="match status" value="1"/>
</dbReference>
<dbReference type="HAMAP" id="MF_00375">
    <property type="entry name" value="HemL_aminotrans_3"/>
    <property type="match status" value="1"/>
</dbReference>
<dbReference type="InterPro" id="IPR004639">
    <property type="entry name" value="4pyrrol_synth_GluAld_NH2Trfase"/>
</dbReference>
<dbReference type="InterPro" id="IPR005814">
    <property type="entry name" value="Aminotrans_3"/>
</dbReference>
<dbReference type="InterPro" id="IPR049704">
    <property type="entry name" value="Aminotrans_3_PPA_site"/>
</dbReference>
<dbReference type="InterPro" id="IPR015424">
    <property type="entry name" value="PyrdxlP-dep_Trfase"/>
</dbReference>
<dbReference type="InterPro" id="IPR015421">
    <property type="entry name" value="PyrdxlP-dep_Trfase_major"/>
</dbReference>
<dbReference type="InterPro" id="IPR015422">
    <property type="entry name" value="PyrdxlP-dep_Trfase_small"/>
</dbReference>
<dbReference type="NCBIfam" id="TIGR00713">
    <property type="entry name" value="hemL"/>
    <property type="match status" value="1"/>
</dbReference>
<dbReference type="NCBIfam" id="NF000818">
    <property type="entry name" value="PRK00062.1"/>
    <property type="match status" value="1"/>
</dbReference>
<dbReference type="PANTHER" id="PTHR43713">
    <property type="entry name" value="GLUTAMATE-1-SEMIALDEHYDE 2,1-AMINOMUTASE"/>
    <property type="match status" value="1"/>
</dbReference>
<dbReference type="PANTHER" id="PTHR43713:SF3">
    <property type="entry name" value="GLUTAMATE-1-SEMIALDEHYDE 2,1-AMINOMUTASE 1, CHLOROPLASTIC-RELATED"/>
    <property type="match status" value="1"/>
</dbReference>
<dbReference type="Pfam" id="PF00202">
    <property type="entry name" value="Aminotran_3"/>
    <property type="match status" value="1"/>
</dbReference>
<dbReference type="SUPFAM" id="SSF53383">
    <property type="entry name" value="PLP-dependent transferases"/>
    <property type="match status" value="1"/>
</dbReference>
<dbReference type="PROSITE" id="PS00600">
    <property type="entry name" value="AA_TRANSFER_CLASS_3"/>
    <property type="match status" value="1"/>
</dbReference>
<gene>
    <name evidence="1" type="primary">hemL</name>
    <name type="ordered locus">MmarC6_0731</name>
</gene>
<name>GSA_METM6</name>
<evidence type="ECO:0000255" key="1">
    <source>
        <dbReference type="HAMAP-Rule" id="MF_00375"/>
    </source>
</evidence>
<protein>
    <recommendedName>
        <fullName evidence="1">Glutamate-1-semialdehyde 2,1-aminomutase</fullName>
        <shortName evidence="1">GSA</shortName>
        <ecNumber evidence="1">5.4.3.8</ecNumber>
    </recommendedName>
    <alternativeName>
        <fullName evidence="1">Glutamate-1-semialdehyde aminotransferase</fullName>
        <shortName evidence="1">GSA-AT</shortName>
    </alternativeName>
</protein>
<proteinExistence type="inferred from homology"/>
<comment type="catalytic activity">
    <reaction evidence="1">
        <text>(S)-4-amino-5-oxopentanoate = 5-aminolevulinate</text>
        <dbReference type="Rhea" id="RHEA:14265"/>
        <dbReference type="ChEBI" id="CHEBI:57501"/>
        <dbReference type="ChEBI" id="CHEBI:356416"/>
        <dbReference type="EC" id="5.4.3.8"/>
    </reaction>
</comment>
<comment type="cofactor">
    <cofactor evidence="1">
        <name>pyridoxal 5'-phosphate</name>
        <dbReference type="ChEBI" id="CHEBI:597326"/>
    </cofactor>
</comment>
<comment type="pathway">
    <text evidence="1">Porphyrin-containing compound metabolism; protoporphyrin-IX biosynthesis; 5-aminolevulinate from L-glutamyl-tRNA(Glu): step 2/2.</text>
</comment>
<comment type="subcellular location">
    <subcellularLocation>
        <location evidence="1">Cytoplasm</location>
    </subcellularLocation>
</comment>
<comment type="similarity">
    <text evidence="1">Belongs to the class-III pyridoxal-phosphate-dependent aminotransferase family. HemL subfamily.</text>
</comment>
<feature type="chain" id="PRO_0000382401" description="Glutamate-1-semialdehyde 2,1-aminomutase">
    <location>
        <begin position="1"/>
        <end position="427"/>
    </location>
</feature>
<feature type="modified residue" description="N6-(pyridoxal phosphate)lysine" evidence="1">
    <location>
        <position position="268"/>
    </location>
</feature>
<organism>
    <name type="scientific">Methanococcus maripaludis (strain C6 / ATCC BAA-1332)</name>
    <dbReference type="NCBI Taxonomy" id="444158"/>
    <lineage>
        <taxon>Archaea</taxon>
        <taxon>Methanobacteriati</taxon>
        <taxon>Methanobacteriota</taxon>
        <taxon>Methanomada group</taxon>
        <taxon>Methanococci</taxon>
        <taxon>Methanococcales</taxon>
        <taxon>Methanococcaceae</taxon>
        <taxon>Methanococcus</taxon>
    </lineage>
</organism>
<reference key="1">
    <citation type="submission" date="2007-10" db="EMBL/GenBank/DDBJ databases">
        <title>Complete sequence of Methanococcus maripaludis C6.</title>
        <authorList>
            <consortium name="US DOE Joint Genome Institute"/>
            <person name="Copeland A."/>
            <person name="Lucas S."/>
            <person name="Lapidus A."/>
            <person name="Barry K."/>
            <person name="Glavina del Rio T."/>
            <person name="Dalin E."/>
            <person name="Tice H."/>
            <person name="Pitluck S."/>
            <person name="Clum A."/>
            <person name="Schmutz J."/>
            <person name="Larimer F."/>
            <person name="Land M."/>
            <person name="Hauser L."/>
            <person name="Kyrpides N."/>
            <person name="Mikhailova N."/>
            <person name="Sieprawska-Lupa M."/>
            <person name="Whitman W.B."/>
            <person name="Richardson P."/>
        </authorList>
    </citation>
    <scope>NUCLEOTIDE SEQUENCE [LARGE SCALE GENOMIC DNA]</scope>
    <source>
        <strain>C6 / ATCC BAA-1332</strain>
    </source>
</reference>